<keyword id="KW-0968">Cytoplasmic vesicle</keyword>
<keyword id="KW-0249">Electron transport</keyword>
<keyword id="KW-0256">Endoplasmic reticulum</keyword>
<keyword id="KW-0349">Heme</keyword>
<keyword id="KW-0408">Iron</keyword>
<keyword id="KW-0472">Membrane</keyword>
<keyword id="KW-0479">Metal-binding</keyword>
<keyword id="KW-1185">Reference proteome</keyword>
<keyword id="KW-1278">Translocase</keyword>
<keyword id="KW-0812">Transmembrane</keyword>
<keyword id="KW-1133">Transmembrane helix</keyword>
<keyword id="KW-0813">Transport</keyword>
<comment type="function">
    <text evidence="5 6">Transmembrane reductase that may use ascorbate as an electron donor in the cytoplasm and transfer electrons across endoplasmic reticulum membranes to reduce monodehydro-L-ascorbate radical and iron cations Fe(3+) in the lumen of that compartment.</text>
</comment>
<comment type="catalytic activity">
    <reaction evidence="1">
        <text>monodehydro-L-ascorbate radical(out) + L-ascorbate(in) = monodehydro-L-ascorbate radical(in) + L-ascorbate(out)</text>
        <dbReference type="Rhea" id="RHEA:66524"/>
        <dbReference type="ChEBI" id="CHEBI:38290"/>
        <dbReference type="ChEBI" id="CHEBI:59513"/>
    </reaction>
    <physiologicalReaction direction="left-to-right" evidence="1">
        <dbReference type="Rhea" id="RHEA:66525"/>
    </physiologicalReaction>
</comment>
<comment type="catalytic activity">
    <reaction evidence="5">
        <text>Fe(3+)(out) + L-ascorbate(in) = monodehydro-L-ascorbate radical(in) + Fe(2+)(out) + H(+)</text>
        <dbReference type="Rhea" id="RHEA:30403"/>
        <dbReference type="ChEBI" id="CHEBI:15378"/>
        <dbReference type="ChEBI" id="CHEBI:29033"/>
        <dbReference type="ChEBI" id="CHEBI:29034"/>
        <dbReference type="ChEBI" id="CHEBI:38290"/>
        <dbReference type="ChEBI" id="CHEBI:59513"/>
        <dbReference type="EC" id="7.2.1.3"/>
    </reaction>
    <physiologicalReaction direction="left-to-right" evidence="8">
        <dbReference type="Rhea" id="RHEA:30404"/>
    </physiologicalReaction>
</comment>
<comment type="cofactor">
    <cofactor evidence="5 6">
        <name>heme b</name>
        <dbReference type="ChEBI" id="CHEBI:60344"/>
    </cofactor>
    <text evidence="6">Binds 2 heme b groups non-covalently.</text>
</comment>
<comment type="biophysicochemical properties">
    <redoxPotential>
        <text evidence="6">E(0) is +141 +/-9 mV for the high potential heme and +43 +/-9 mV for the low potential heme.</text>
    </redoxPotential>
</comment>
<comment type="subcellular location">
    <subcellularLocation>
        <location evidence="5">Endoplasmic reticulum membrane</location>
        <topology evidence="2">Multi-pass membrane protein</topology>
    </subcellularLocation>
    <subcellularLocation>
        <location evidence="5">Cytoplasmic vesicle membrane</location>
        <topology evidence="2">Multi-pass membrane protein</topology>
    </subcellularLocation>
</comment>
<comment type="tissue specificity">
    <text evidence="5">Highly expressed in the brain, lung, liver, and kidney (PubMed:17938141). Moderately expressed in the heart, placenta, skeletal muscle, and pancreas (PubMed:17938141).</text>
</comment>
<dbReference type="EC" id="7.2.1.3" evidence="5"/>
<dbReference type="EMBL" id="AF131206">
    <property type="protein sequence ID" value="AAD33473.1"/>
    <property type="molecule type" value="mRNA"/>
</dbReference>
<dbReference type="EMBL" id="AK030225">
    <property type="protein sequence ID" value="BAC26855.1"/>
    <property type="molecule type" value="mRNA"/>
</dbReference>
<dbReference type="EMBL" id="AK162586">
    <property type="protein sequence ID" value="BAE36976.1"/>
    <property type="molecule type" value="mRNA"/>
</dbReference>
<dbReference type="EMBL" id="BC027212">
    <property type="protein sequence ID" value="AAH27212.1"/>
    <property type="molecule type" value="mRNA"/>
</dbReference>
<dbReference type="CCDS" id="CCDS23491.1"/>
<dbReference type="RefSeq" id="NP_001344218.1">
    <property type="nucleotide sequence ID" value="NM_001357289.2"/>
</dbReference>
<dbReference type="RefSeq" id="NP_001421278.1">
    <property type="nucleotide sequence ID" value="NM_001434349.1"/>
</dbReference>
<dbReference type="RefSeq" id="NP_062694.1">
    <property type="nucleotide sequence ID" value="NM_019720.5"/>
</dbReference>
<dbReference type="RefSeq" id="XP_006511838.1">
    <property type="nucleotide sequence ID" value="XM_006511775.3"/>
</dbReference>
<dbReference type="RefSeq" id="XP_006511839.1">
    <property type="nucleotide sequence ID" value="XM_006511776.3"/>
</dbReference>
<dbReference type="SMR" id="Q9WUE3"/>
<dbReference type="FunCoup" id="Q9WUE3">
    <property type="interactions" value="501"/>
</dbReference>
<dbReference type="STRING" id="10090.ENSMUSP00000044093"/>
<dbReference type="TCDB" id="5.B.2.1.2">
    <property type="family name" value="the eukaryotic cytochrome b561 (cytb561) family"/>
</dbReference>
<dbReference type="iPTMnet" id="Q9WUE3"/>
<dbReference type="PhosphoSitePlus" id="Q9WUE3"/>
<dbReference type="jPOST" id="Q9WUE3"/>
<dbReference type="PaxDb" id="10090-ENSMUSP00000044093"/>
<dbReference type="ProteomicsDB" id="281719"/>
<dbReference type="Pumba" id="Q9WUE3"/>
<dbReference type="Antibodypedia" id="30954">
    <property type="antibodies" value="137 antibodies from 27 providers"/>
</dbReference>
<dbReference type="DNASU" id="56368"/>
<dbReference type="Ensembl" id="ENSMUST00000041459.9">
    <property type="protein sequence ID" value="ENSMUSP00000044093.4"/>
    <property type="gene ID" value="ENSMUSG00000037190.13"/>
</dbReference>
<dbReference type="Ensembl" id="ENSMUST00000195235.6">
    <property type="protein sequence ID" value="ENSMUSP00000141723.2"/>
    <property type="gene ID" value="ENSMUSG00000037190.13"/>
</dbReference>
<dbReference type="GeneID" id="56368"/>
<dbReference type="KEGG" id="mmu:56368"/>
<dbReference type="UCSC" id="uc009rll.1">
    <property type="organism name" value="mouse"/>
</dbReference>
<dbReference type="AGR" id="MGI:1929280"/>
<dbReference type="CTD" id="11068"/>
<dbReference type="MGI" id="MGI:1929280">
    <property type="gene designation" value="Cyb561d2"/>
</dbReference>
<dbReference type="VEuPathDB" id="HostDB:ENSMUSG00000037190"/>
<dbReference type="eggNOG" id="ENOG502QRPJ">
    <property type="taxonomic scope" value="Eukaryota"/>
</dbReference>
<dbReference type="GeneTree" id="ENSGT00440000038072"/>
<dbReference type="HOGENOM" id="CLU_072399_3_0_1"/>
<dbReference type="InParanoid" id="Q9WUE3"/>
<dbReference type="OMA" id="IFYNKHL"/>
<dbReference type="OrthoDB" id="432881at2759"/>
<dbReference type="PhylomeDB" id="Q9WUE3"/>
<dbReference type="TreeFam" id="TF323584"/>
<dbReference type="BRENDA" id="7.2.1.3">
    <property type="organism ID" value="3474"/>
</dbReference>
<dbReference type="BioGRID-ORCS" id="56368">
    <property type="hits" value="1 hit in 77 CRISPR screens"/>
</dbReference>
<dbReference type="PRO" id="PR:Q9WUE3"/>
<dbReference type="Proteomes" id="UP000000589">
    <property type="component" value="Chromosome 9"/>
</dbReference>
<dbReference type="RNAct" id="Q9WUE3">
    <property type="molecule type" value="protein"/>
</dbReference>
<dbReference type="Bgee" id="ENSMUSG00000037190">
    <property type="expression patterns" value="Expressed in Meckel's cartilage and 250 other cell types or tissues"/>
</dbReference>
<dbReference type="ExpressionAtlas" id="Q9WUE3">
    <property type="expression patterns" value="baseline and differential"/>
</dbReference>
<dbReference type="GO" id="GO:0030659">
    <property type="term" value="C:cytoplasmic vesicle membrane"/>
    <property type="evidence" value="ECO:0007669"/>
    <property type="project" value="UniProtKB-SubCell"/>
</dbReference>
<dbReference type="GO" id="GO:0005783">
    <property type="term" value="C:endoplasmic reticulum"/>
    <property type="evidence" value="ECO:0000314"/>
    <property type="project" value="UniProtKB"/>
</dbReference>
<dbReference type="GO" id="GO:0005789">
    <property type="term" value="C:endoplasmic reticulum membrane"/>
    <property type="evidence" value="ECO:0007669"/>
    <property type="project" value="UniProtKB-SubCell"/>
</dbReference>
<dbReference type="GO" id="GO:0031982">
    <property type="term" value="C:vesicle"/>
    <property type="evidence" value="ECO:0000314"/>
    <property type="project" value="UniProtKB"/>
</dbReference>
<dbReference type="GO" id="GO:0020037">
    <property type="term" value="F:heme binding"/>
    <property type="evidence" value="ECO:0000314"/>
    <property type="project" value="UniProtKB"/>
</dbReference>
<dbReference type="GO" id="GO:0046872">
    <property type="term" value="F:metal ion binding"/>
    <property type="evidence" value="ECO:0007669"/>
    <property type="project" value="UniProtKB-KW"/>
</dbReference>
<dbReference type="GO" id="GO:0140571">
    <property type="term" value="F:transmembrane ascorbate ferrireductase activity"/>
    <property type="evidence" value="ECO:0000315"/>
    <property type="project" value="UniProtKB"/>
</dbReference>
<dbReference type="GO" id="GO:0140575">
    <property type="term" value="F:transmembrane monodehydroascorbate reductase activity"/>
    <property type="evidence" value="ECO:0000250"/>
    <property type="project" value="UniProtKB"/>
</dbReference>
<dbReference type="GO" id="GO:0140576">
    <property type="term" value="P:ascorbate homeostasis"/>
    <property type="evidence" value="ECO:0000250"/>
    <property type="project" value="UniProtKB"/>
</dbReference>
<dbReference type="CDD" id="cd08761">
    <property type="entry name" value="Cyt_b561_CYB561D2_like"/>
    <property type="match status" value="1"/>
</dbReference>
<dbReference type="FunFam" id="1.20.120.1770:FF:000002">
    <property type="entry name" value="Cytochrome b561 domain-containing protein 2"/>
    <property type="match status" value="1"/>
</dbReference>
<dbReference type="Gene3D" id="1.20.120.1770">
    <property type="match status" value="1"/>
</dbReference>
<dbReference type="InterPro" id="IPR045150">
    <property type="entry name" value="CYB561D1/2"/>
</dbReference>
<dbReference type="InterPro" id="IPR006593">
    <property type="entry name" value="Cyt_b561/ferric_Rdtase_TM"/>
</dbReference>
<dbReference type="PANTHER" id="PTHR15422">
    <property type="entry name" value="OS05G0565100 PROTEIN"/>
    <property type="match status" value="1"/>
</dbReference>
<dbReference type="PANTHER" id="PTHR15422:SF21">
    <property type="entry name" value="TRANSMEMBRANE REDUCTASE CYB561D2"/>
    <property type="match status" value="1"/>
</dbReference>
<dbReference type="Pfam" id="PF03188">
    <property type="entry name" value="Cytochrom_B561"/>
    <property type="match status" value="1"/>
</dbReference>
<dbReference type="SMART" id="SM00665">
    <property type="entry name" value="B561"/>
    <property type="match status" value="1"/>
</dbReference>
<dbReference type="PROSITE" id="PS50939">
    <property type="entry name" value="CYTOCHROME_B561"/>
    <property type="match status" value="1"/>
</dbReference>
<evidence type="ECO:0000250" key="1">
    <source>
        <dbReference type="UniProtKB" id="O14569"/>
    </source>
</evidence>
<evidence type="ECO:0000250" key="2">
    <source>
        <dbReference type="UniProtKB" id="Q53TN4"/>
    </source>
</evidence>
<evidence type="ECO:0000255" key="3"/>
<evidence type="ECO:0000255" key="4">
    <source>
        <dbReference type="PROSITE-ProRule" id="PRU00242"/>
    </source>
</evidence>
<evidence type="ECO:0000269" key="5">
    <source>
    </source>
</evidence>
<evidence type="ECO:0000269" key="6">
    <source>
    </source>
</evidence>
<evidence type="ECO:0000303" key="7">
    <source>
    </source>
</evidence>
<evidence type="ECO:0000305" key="8">
    <source>
    </source>
</evidence>
<evidence type="ECO:0000312" key="9">
    <source>
        <dbReference type="MGI" id="MGI:1929280"/>
    </source>
</evidence>
<name>C56D2_MOUSE</name>
<reference key="1">
    <citation type="submission" date="1999-02" db="EMBL/GenBank/DDBJ databases">
        <title>Mouse ortholog of the human 101F6 gene.</title>
        <authorList>
            <person name="Duh F.-M."/>
            <person name="Minna J.D."/>
            <person name="Lerman M.I."/>
        </authorList>
    </citation>
    <scope>NUCLEOTIDE SEQUENCE [MRNA]</scope>
    <source>
        <strain>C57BL/6J</strain>
    </source>
</reference>
<reference key="2">
    <citation type="journal article" date="2007" name="J. Biochem.">
        <title>Involvement of 101F6, a homologue of cytochrome b561, in the reduction of ferric ions.</title>
        <authorList>
            <person name="Mizutani A."/>
            <person name="Sanuki R."/>
            <person name="Kakimoto K."/>
            <person name="Kojo S."/>
            <person name="Taketani S."/>
        </authorList>
    </citation>
    <scope>NUCLEOTIDE SEQUENCE [MRNA]</scope>
    <scope>FUNCTION</scope>
    <scope>CATALYTIC ACTIVITY</scope>
    <scope>COFACTOR</scope>
    <scope>SUBCELLULAR LOCATION</scope>
    <scope>TISSUE SPECIFICITY</scope>
    <scope>MUTAGENESIS OF 111-LEU--PRO-222 AND 139-MET--PRO-222</scope>
</reference>
<reference key="3">
    <citation type="journal article" date="2005" name="Science">
        <title>The transcriptional landscape of the mammalian genome.</title>
        <authorList>
            <person name="Carninci P."/>
            <person name="Kasukawa T."/>
            <person name="Katayama S."/>
            <person name="Gough J."/>
            <person name="Frith M.C."/>
            <person name="Maeda N."/>
            <person name="Oyama R."/>
            <person name="Ravasi T."/>
            <person name="Lenhard B."/>
            <person name="Wells C."/>
            <person name="Kodzius R."/>
            <person name="Shimokawa K."/>
            <person name="Bajic V.B."/>
            <person name="Brenner S.E."/>
            <person name="Batalov S."/>
            <person name="Forrest A.R."/>
            <person name="Zavolan M."/>
            <person name="Davis M.J."/>
            <person name="Wilming L.G."/>
            <person name="Aidinis V."/>
            <person name="Allen J.E."/>
            <person name="Ambesi-Impiombato A."/>
            <person name="Apweiler R."/>
            <person name="Aturaliya R.N."/>
            <person name="Bailey T.L."/>
            <person name="Bansal M."/>
            <person name="Baxter L."/>
            <person name="Beisel K.W."/>
            <person name="Bersano T."/>
            <person name="Bono H."/>
            <person name="Chalk A.M."/>
            <person name="Chiu K.P."/>
            <person name="Choudhary V."/>
            <person name="Christoffels A."/>
            <person name="Clutterbuck D.R."/>
            <person name="Crowe M.L."/>
            <person name="Dalla E."/>
            <person name="Dalrymple B.P."/>
            <person name="de Bono B."/>
            <person name="Della Gatta G."/>
            <person name="di Bernardo D."/>
            <person name="Down T."/>
            <person name="Engstrom P."/>
            <person name="Fagiolini M."/>
            <person name="Faulkner G."/>
            <person name="Fletcher C.F."/>
            <person name="Fukushima T."/>
            <person name="Furuno M."/>
            <person name="Futaki S."/>
            <person name="Gariboldi M."/>
            <person name="Georgii-Hemming P."/>
            <person name="Gingeras T.R."/>
            <person name="Gojobori T."/>
            <person name="Green R.E."/>
            <person name="Gustincich S."/>
            <person name="Harbers M."/>
            <person name="Hayashi Y."/>
            <person name="Hensch T.K."/>
            <person name="Hirokawa N."/>
            <person name="Hill D."/>
            <person name="Huminiecki L."/>
            <person name="Iacono M."/>
            <person name="Ikeo K."/>
            <person name="Iwama A."/>
            <person name="Ishikawa T."/>
            <person name="Jakt M."/>
            <person name="Kanapin A."/>
            <person name="Katoh M."/>
            <person name="Kawasawa Y."/>
            <person name="Kelso J."/>
            <person name="Kitamura H."/>
            <person name="Kitano H."/>
            <person name="Kollias G."/>
            <person name="Krishnan S.P."/>
            <person name="Kruger A."/>
            <person name="Kummerfeld S.K."/>
            <person name="Kurochkin I.V."/>
            <person name="Lareau L.F."/>
            <person name="Lazarevic D."/>
            <person name="Lipovich L."/>
            <person name="Liu J."/>
            <person name="Liuni S."/>
            <person name="McWilliam S."/>
            <person name="Madan Babu M."/>
            <person name="Madera M."/>
            <person name="Marchionni L."/>
            <person name="Matsuda H."/>
            <person name="Matsuzawa S."/>
            <person name="Miki H."/>
            <person name="Mignone F."/>
            <person name="Miyake S."/>
            <person name="Morris K."/>
            <person name="Mottagui-Tabar S."/>
            <person name="Mulder N."/>
            <person name="Nakano N."/>
            <person name="Nakauchi H."/>
            <person name="Ng P."/>
            <person name="Nilsson R."/>
            <person name="Nishiguchi S."/>
            <person name="Nishikawa S."/>
            <person name="Nori F."/>
            <person name="Ohara O."/>
            <person name="Okazaki Y."/>
            <person name="Orlando V."/>
            <person name="Pang K.C."/>
            <person name="Pavan W.J."/>
            <person name="Pavesi G."/>
            <person name="Pesole G."/>
            <person name="Petrovsky N."/>
            <person name="Piazza S."/>
            <person name="Reed J."/>
            <person name="Reid J.F."/>
            <person name="Ring B.Z."/>
            <person name="Ringwald M."/>
            <person name="Rost B."/>
            <person name="Ruan Y."/>
            <person name="Salzberg S.L."/>
            <person name="Sandelin A."/>
            <person name="Schneider C."/>
            <person name="Schoenbach C."/>
            <person name="Sekiguchi K."/>
            <person name="Semple C.A."/>
            <person name="Seno S."/>
            <person name="Sessa L."/>
            <person name="Sheng Y."/>
            <person name="Shibata Y."/>
            <person name="Shimada H."/>
            <person name="Shimada K."/>
            <person name="Silva D."/>
            <person name="Sinclair B."/>
            <person name="Sperling S."/>
            <person name="Stupka E."/>
            <person name="Sugiura K."/>
            <person name="Sultana R."/>
            <person name="Takenaka Y."/>
            <person name="Taki K."/>
            <person name="Tammoja K."/>
            <person name="Tan S.L."/>
            <person name="Tang S."/>
            <person name="Taylor M.S."/>
            <person name="Tegner J."/>
            <person name="Teichmann S.A."/>
            <person name="Ueda H.R."/>
            <person name="van Nimwegen E."/>
            <person name="Verardo R."/>
            <person name="Wei C.L."/>
            <person name="Yagi K."/>
            <person name="Yamanishi H."/>
            <person name="Zabarovsky E."/>
            <person name="Zhu S."/>
            <person name="Zimmer A."/>
            <person name="Hide W."/>
            <person name="Bult C."/>
            <person name="Grimmond S.M."/>
            <person name="Teasdale R.D."/>
            <person name="Liu E.T."/>
            <person name="Brusic V."/>
            <person name="Quackenbush J."/>
            <person name="Wahlestedt C."/>
            <person name="Mattick J.S."/>
            <person name="Hume D.A."/>
            <person name="Kai C."/>
            <person name="Sasaki D."/>
            <person name="Tomaru Y."/>
            <person name="Fukuda S."/>
            <person name="Kanamori-Katayama M."/>
            <person name="Suzuki M."/>
            <person name="Aoki J."/>
            <person name="Arakawa T."/>
            <person name="Iida J."/>
            <person name="Imamura K."/>
            <person name="Itoh M."/>
            <person name="Kato T."/>
            <person name="Kawaji H."/>
            <person name="Kawagashira N."/>
            <person name="Kawashima T."/>
            <person name="Kojima M."/>
            <person name="Kondo S."/>
            <person name="Konno H."/>
            <person name="Nakano K."/>
            <person name="Ninomiya N."/>
            <person name="Nishio T."/>
            <person name="Okada M."/>
            <person name="Plessy C."/>
            <person name="Shibata K."/>
            <person name="Shiraki T."/>
            <person name="Suzuki S."/>
            <person name="Tagami M."/>
            <person name="Waki K."/>
            <person name="Watahiki A."/>
            <person name="Okamura-Oho Y."/>
            <person name="Suzuki H."/>
            <person name="Kawai J."/>
            <person name="Hayashizaki Y."/>
        </authorList>
    </citation>
    <scope>NUCLEOTIDE SEQUENCE [LARGE SCALE MRNA]</scope>
    <source>
        <strain>C57BL/6J</strain>
        <tissue>Cerebellum</tissue>
        <tissue>Testis</tissue>
    </source>
</reference>
<reference key="4">
    <citation type="journal article" date="2004" name="Genome Res.">
        <title>The status, quality, and expansion of the NIH full-length cDNA project: the Mammalian Gene Collection (MGC).</title>
        <authorList>
            <consortium name="The MGC Project Team"/>
        </authorList>
    </citation>
    <scope>NUCLEOTIDE SEQUENCE [LARGE SCALE MRNA]</scope>
    <source>
        <strain>FVB/N</strain>
        <tissue>Mammary tumor</tissue>
    </source>
</reference>
<reference key="5">
    <citation type="journal article" date="2010" name="Eur. Biophys. J.">
        <title>Spectral characterization of the recombinant mouse tumor suppressor 101F6 protein.</title>
        <authorList>
            <person name="Berczi A."/>
            <person name="Desmet F."/>
            <person name="Van Doorslaer S."/>
            <person name="Asard H."/>
        </authorList>
    </citation>
    <scope>FUNCTION</scope>
    <scope>COFACTOR</scope>
    <scope>BIOPHYSICOCHEMICAL PROPERTIES</scope>
</reference>
<gene>
    <name evidence="9" type="primary">Cyb561d2</name>
    <name evidence="7" type="synonym">101f6</name>
</gene>
<protein>
    <recommendedName>
        <fullName evidence="8">Transmembrane reductase CYB561D2</fullName>
        <ecNumber evidence="5">7.2.1.3</ecNumber>
    </recommendedName>
    <alternativeName>
        <fullName evidence="9">Cytochrome b561 domain-containing protein 2</fullName>
    </alternativeName>
</protein>
<sequence>MALSVETESHIYRALRTASGAAAHLVALGFTIFVAVLARPGSSLFSWHPVLMSLAFSFLMTEALLMFSPESSLLRSLSRKVRARCHWVLQLLALLCALLGLGLVILHKEQLGKAHLTTRHGQAGLLAVLWAGLQCSGGMGLLYPKLLPRWPLAKLKLYHATSGLVGYLLGSASLLLGMFSLWFTATVTGGAWYLAVLCPILTSLVIMNQVSNAYLYRKRIQP</sequence>
<proteinExistence type="evidence at protein level"/>
<accession>Q9WUE3</accession>
<accession>Q3TRQ1</accession>
<feature type="initiator methionine" description="Removed" evidence="1">
    <location>
        <position position="1"/>
    </location>
</feature>
<feature type="chain" id="PRO_0000151037" description="Transmembrane reductase CYB561D2">
    <location>
        <begin position="2"/>
        <end position="222"/>
    </location>
</feature>
<feature type="topological domain" description="Cytoplasmic" evidence="2">
    <location>
        <begin position="2"/>
        <end position="17"/>
    </location>
</feature>
<feature type="transmembrane region" description="Helical" evidence="3">
    <location>
        <begin position="18"/>
        <end position="38"/>
    </location>
</feature>
<feature type="topological domain" description="Lumenal" evidence="2">
    <location>
        <begin position="39"/>
        <end position="46"/>
    </location>
</feature>
<feature type="transmembrane region" description="Helical" evidence="3">
    <location>
        <begin position="47"/>
        <end position="67"/>
    </location>
</feature>
<feature type="topological domain" description="Cytoplasmic" evidence="2">
    <location>
        <begin position="68"/>
        <end position="85"/>
    </location>
</feature>
<feature type="transmembrane region" description="Helical" evidence="3">
    <location>
        <begin position="86"/>
        <end position="106"/>
    </location>
</feature>
<feature type="topological domain" description="Lumenal" evidence="2">
    <location>
        <begin position="107"/>
        <end position="122"/>
    </location>
</feature>
<feature type="transmembrane region" description="Helical" evidence="3">
    <location>
        <begin position="123"/>
        <end position="143"/>
    </location>
</feature>
<feature type="topological domain" description="Cytoplasmic" evidence="2">
    <location>
        <begin position="144"/>
        <end position="162"/>
    </location>
</feature>
<feature type="transmembrane region" description="Helical" evidence="3">
    <location>
        <begin position="163"/>
        <end position="183"/>
    </location>
</feature>
<feature type="topological domain" description="Lumenal" evidence="2">
    <location>
        <begin position="184"/>
        <end position="186"/>
    </location>
</feature>
<feature type="transmembrane region" description="Helical" evidence="3">
    <location>
        <begin position="187"/>
        <end position="207"/>
    </location>
</feature>
<feature type="topological domain" description="Cytoplasmic" evidence="2">
    <location>
        <begin position="208"/>
        <end position="222"/>
    </location>
</feature>
<feature type="domain" description="Cytochrome b561" evidence="4">
    <location>
        <begin position="14"/>
        <end position="217"/>
    </location>
</feature>
<feature type="binding site" description="axial binding residue" evidence="2">
    <location>
        <position position="48"/>
    </location>
    <ligand>
        <name>heme b</name>
        <dbReference type="ChEBI" id="CHEBI:60344"/>
        <label>1</label>
    </ligand>
    <ligandPart>
        <name>Fe</name>
        <dbReference type="ChEBI" id="CHEBI:18248"/>
    </ligandPart>
</feature>
<feature type="binding site" description="axial binding residue" evidence="2">
    <location>
        <position position="86"/>
    </location>
    <ligand>
        <name>heme b</name>
        <dbReference type="ChEBI" id="CHEBI:60344"/>
        <label>2</label>
    </ligand>
    <ligandPart>
        <name>Fe</name>
        <dbReference type="ChEBI" id="CHEBI:18248"/>
    </ligandPart>
</feature>
<feature type="binding site" description="axial binding residue" evidence="2">
    <location>
        <position position="120"/>
    </location>
    <ligand>
        <name>heme b</name>
        <dbReference type="ChEBI" id="CHEBI:60344"/>
        <label>1</label>
    </ligand>
    <ligandPart>
        <name>Fe</name>
        <dbReference type="ChEBI" id="CHEBI:18248"/>
    </ligandPart>
</feature>
<feature type="binding site" description="axial binding residue" evidence="2">
    <location>
        <position position="159"/>
    </location>
    <ligand>
        <name>heme b</name>
        <dbReference type="ChEBI" id="CHEBI:60344"/>
        <label>2</label>
    </ligand>
    <ligandPart>
        <name>Fe</name>
        <dbReference type="ChEBI" id="CHEBI:18248"/>
    </ligandPart>
</feature>
<feature type="mutagenesis site" description="Loss of heme binding." evidence="5">
    <location>
        <begin position="111"/>
        <end position="222"/>
    </location>
</feature>
<feature type="mutagenesis site" description="Loss of heme binding." evidence="5">
    <location>
        <begin position="139"/>
        <end position="222"/>
    </location>
</feature>
<organism>
    <name type="scientific">Mus musculus</name>
    <name type="common">Mouse</name>
    <dbReference type="NCBI Taxonomy" id="10090"/>
    <lineage>
        <taxon>Eukaryota</taxon>
        <taxon>Metazoa</taxon>
        <taxon>Chordata</taxon>
        <taxon>Craniata</taxon>
        <taxon>Vertebrata</taxon>
        <taxon>Euteleostomi</taxon>
        <taxon>Mammalia</taxon>
        <taxon>Eutheria</taxon>
        <taxon>Euarchontoglires</taxon>
        <taxon>Glires</taxon>
        <taxon>Rodentia</taxon>
        <taxon>Myomorpha</taxon>
        <taxon>Muroidea</taxon>
        <taxon>Muridae</taxon>
        <taxon>Murinae</taxon>
        <taxon>Mus</taxon>
        <taxon>Mus</taxon>
    </lineage>
</organism>